<feature type="chain" id="PRO_0000254348" description="ATP synthase subunit beta">
    <location>
        <begin position="1"/>
        <end position="467"/>
    </location>
</feature>
<feature type="binding site" evidence="1">
    <location>
        <begin position="156"/>
        <end position="163"/>
    </location>
    <ligand>
        <name>ATP</name>
        <dbReference type="ChEBI" id="CHEBI:30616"/>
    </ligand>
</feature>
<accession>Q1LHL0</accession>
<name>ATPB_CUPMC</name>
<evidence type="ECO:0000255" key="1">
    <source>
        <dbReference type="HAMAP-Rule" id="MF_01347"/>
    </source>
</evidence>
<gene>
    <name evidence="1" type="primary">atpD</name>
    <name type="ordered locus">Rmet_3494</name>
</gene>
<comment type="function">
    <text evidence="1">Produces ATP from ADP in the presence of a proton gradient across the membrane. The catalytic sites are hosted primarily by the beta subunits.</text>
</comment>
<comment type="catalytic activity">
    <reaction evidence="1">
        <text>ATP + H2O + 4 H(+)(in) = ADP + phosphate + 5 H(+)(out)</text>
        <dbReference type="Rhea" id="RHEA:57720"/>
        <dbReference type="ChEBI" id="CHEBI:15377"/>
        <dbReference type="ChEBI" id="CHEBI:15378"/>
        <dbReference type="ChEBI" id="CHEBI:30616"/>
        <dbReference type="ChEBI" id="CHEBI:43474"/>
        <dbReference type="ChEBI" id="CHEBI:456216"/>
        <dbReference type="EC" id="7.1.2.2"/>
    </reaction>
</comment>
<comment type="subunit">
    <text evidence="1">F-type ATPases have 2 components, CF(1) - the catalytic core - and CF(0) - the membrane proton channel. CF(1) has five subunits: alpha(3), beta(3), gamma(1), delta(1), epsilon(1). CF(0) has three main subunits: a(1), b(2) and c(9-12). The alpha and beta chains form an alternating ring which encloses part of the gamma chain. CF(1) is attached to CF(0) by a central stalk formed by the gamma and epsilon chains, while a peripheral stalk is formed by the delta and b chains.</text>
</comment>
<comment type="subcellular location">
    <subcellularLocation>
        <location evidence="1">Cell inner membrane</location>
        <topology evidence="1">Peripheral membrane protein</topology>
    </subcellularLocation>
</comment>
<comment type="similarity">
    <text evidence="1">Belongs to the ATPase alpha/beta chains family.</text>
</comment>
<sequence length="467" mass="50977">MSIGNIVQCIGAVVDIEFPRDAMPKVYDALVLEEGNDKSFAEKGLTFEVQQQLGDGVVRTIALGSSDGLRRGMSVMSTGAPISVPVGHGTLGRIMDVLGRPIDEAGPIEADEKRAIHQKAPKFDELSPSVDLLETGIKVIDLVCPFAKGGKVGLFGGAGVGKTVNMMELINNIAKQHSGLSVFAGVGERTREGNDFYHEMKDSNVLDKVAMVFGQMNEPPGNRLRVALTGLTMAERFRDEGRDILFFVDNIYRYTLAGTEVSALLGRMPSAVGYQPTLAEEMGKLQERITSTKTGSITSIQAVYVPADDLTDPSPATTFLHLDSTVVLSRDIAALGIYPAVDPLDSTSRQLDPQVVGTEHYEVARRVQQTLQRYKELRDIIAILGMDELSPEDKLAVSRARKIQRFLSQPFHVAEVFTGSPGKYVPLKETIRGFKMLVDGECDHLPEQAFYMVGSIDEAFEKAKKLQ</sequence>
<dbReference type="EC" id="7.1.2.2" evidence="1"/>
<dbReference type="EMBL" id="CP000352">
    <property type="protein sequence ID" value="ABF10366.1"/>
    <property type="molecule type" value="Genomic_DNA"/>
</dbReference>
<dbReference type="RefSeq" id="WP_011517922.1">
    <property type="nucleotide sequence ID" value="NC_007973.1"/>
</dbReference>
<dbReference type="SMR" id="Q1LHL0"/>
<dbReference type="STRING" id="266264.Rmet_3494"/>
<dbReference type="KEGG" id="rme:Rmet_3494"/>
<dbReference type="eggNOG" id="COG0055">
    <property type="taxonomic scope" value="Bacteria"/>
</dbReference>
<dbReference type="HOGENOM" id="CLU_022398_0_2_4"/>
<dbReference type="Proteomes" id="UP000002429">
    <property type="component" value="Chromosome"/>
</dbReference>
<dbReference type="GO" id="GO:0005886">
    <property type="term" value="C:plasma membrane"/>
    <property type="evidence" value="ECO:0007669"/>
    <property type="project" value="UniProtKB-SubCell"/>
</dbReference>
<dbReference type="GO" id="GO:0045259">
    <property type="term" value="C:proton-transporting ATP synthase complex"/>
    <property type="evidence" value="ECO:0007669"/>
    <property type="project" value="UniProtKB-KW"/>
</dbReference>
<dbReference type="GO" id="GO:0005524">
    <property type="term" value="F:ATP binding"/>
    <property type="evidence" value="ECO:0007669"/>
    <property type="project" value="UniProtKB-UniRule"/>
</dbReference>
<dbReference type="GO" id="GO:0016887">
    <property type="term" value="F:ATP hydrolysis activity"/>
    <property type="evidence" value="ECO:0007669"/>
    <property type="project" value="InterPro"/>
</dbReference>
<dbReference type="GO" id="GO:0046933">
    <property type="term" value="F:proton-transporting ATP synthase activity, rotational mechanism"/>
    <property type="evidence" value="ECO:0007669"/>
    <property type="project" value="UniProtKB-UniRule"/>
</dbReference>
<dbReference type="CDD" id="cd18110">
    <property type="entry name" value="ATP-synt_F1_beta_C"/>
    <property type="match status" value="1"/>
</dbReference>
<dbReference type="CDD" id="cd18115">
    <property type="entry name" value="ATP-synt_F1_beta_N"/>
    <property type="match status" value="1"/>
</dbReference>
<dbReference type="CDD" id="cd01133">
    <property type="entry name" value="F1-ATPase_beta_CD"/>
    <property type="match status" value="1"/>
</dbReference>
<dbReference type="FunFam" id="1.10.1140.10:FF:000001">
    <property type="entry name" value="ATP synthase subunit beta"/>
    <property type="match status" value="1"/>
</dbReference>
<dbReference type="FunFam" id="3.40.50.300:FF:000004">
    <property type="entry name" value="ATP synthase subunit beta"/>
    <property type="match status" value="1"/>
</dbReference>
<dbReference type="Gene3D" id="2.40.10.170">
    <property type="match status" value="1"/>
</dbReference>
<dbReference type="Gene3D" id="1.10.1140.10">
    <property type="entry name" value="Bovine Mitochondrial F1-atpase, Atp Synthase Beta Chain, Chain D, domain 3"/>
    <property type="match status" value="1"/>
</dbReference>
<dbReference type="Gene3D" id="3.40.50.300">
    <property type="entry name" value="P-loop containing nucleotide triphosphate hydrolases"/>
    <property type="match status" value="1"/>
</dbReference>
<dbReference type="HAMAP" id="MF_01347">
    <property type="entry name" value="ATP_synth_beta_bact"/>
    <property type="match status" value="1"/>
</dbReference>
<dbReference type="InterPro" id="IPR003593">
    <property type="entry name" value="AAA+_ATPase"/>
</dbReference>
<dbReference type="InterPro" id="IPR055190">
    <property type="entry name" value="ATP-synt_VA_C"/>
</dbReference>
<dbReference type="InterPro" id="IPR005722">
    <property type="entry name" value="ATP_synth_F1_bsu"/>
</dbReference>
<dbReference type="InterPro" id="IPR020003">
    <property type="entry name" value="ATPase_a/bsu_AS"/>
</dbReference>
<dbReference type="InterPro" id="IPR050053">
    <property type="entry name" value="ATPase_alpha/beta_chains"/>
</dbReference>
<dbReference type="InterPro" id="IPR004100">
    <property type="entry name" value="ATPase_F1/V1/A1_a/bsu_N"/>
</dbReference>
<dbReference type="InterPro" id="IPR036121">
    <property type="entry name" value="ATPase_F1/V1/A1_a/bsu_N_sf"/>
</dbReference>
<dbReference type="InterPro" id="IPR000194">
    <property type="entry name" value="ATPase_F1/V1/A1_a/bsu_nucl-bd"/>
</dbReference>
<dbReference type="InterPro" id="IPR024034">
    <property type="entry name" value="ATPase_F1/V1_b/a_C"/>
</dbReference>
<dbReference type="InterPro" id="IPR027417">
    <property type="entry name" value="P-loop_NTPase"/>
</dbReference>
<dbReference type="NCBIfam" id="TIGR01039">
    <property type="entry name" value="atpD"/>
    <property type="match status" value="1"/>
</dbReference>
<dbReference type="PANTHER" id="PTHR15184">
    <property type="entry name" value="ATP SYNTHASE"/>
    <property type="match status" value="1"/>
</dbReference>
<dbReference type="PANTHER" id="PTHR15184:SF71">
    <property type="entry name" value="ATP SYNTHASE SUBUNIT BETA, MITOCHONDRIAL"/>
    <property type="match status" value="1"/>
</dbReference>
<dbReference type="Pfam" id="PF00006">
    <property type="entry name" value="ATP-synt_ab"/>
    <property type="match status" value="1"/>
</dbReference>
<dbReference type="Pfam" id="PF02874">
    <property type="entry name" value="ATP-synt_ab_N"/>
    <property type="match status" value="1"/>
</dbReference>
<dbReference type="Pfam" id="PF22919">
    <property type="entry name" value="ATP-synt_VA_C"/>
    <property type="match status" value="1"/>
</dbReference>
<dbReference type="SMART" id="SM00382">
    <property type="entry name" value="AAA"/>
    <property type="match status" value="1"/>
</dbReference>
<dbReference type="SUPFAM" id="SSF47917">
    <property type="entry name" value="C-terminal domain of alpha and beta subunits of F1 ATP synthase"/>
    <property type="match status" value="1"/>
</dbReference>
<dbReference type="SUPFAM" id="SSF50615">
    <property type="entry name" value="N-terminal domain of alpha and beta subunits of F1 ATP synthase"/>
    <property type="match status" value="1"/>
</dbReference>
<dbReference type="SUPFAM" id="SSF52540">
    <property type="entry name" value="P-loop containing nucleoside triphosphate hydrolases"/>
    <property type="match status" value="1"/>
</dbReference>
<dbReference type="PROSITE" id="PS00152">
    <property type="entry name" value="ATPASE_ALPHA_BETA"/>
    <property type="match status" value="1"/>
</dbReference>
<keyword id="KW-0066">ATP synthesis</keyword>
<keyword id="KW-0067">ATP-binding</keyword>
<keyword id="KW-0997">Cell inner membrane</keyword>
<keyword id="KW-1003">Cell membrane</keyword>
<keyword id="KW-0139">CF(1)</keyword>
<keyword id="KW-0375">Hydrogen ion transport</keyword>
<keyword id="KW-0406">Ion transport</keyword>
<keyword id="KW-0472">Membrane</keyword>
<keyword id="KW-0547">Nucleotide-binding</keyword>
<keyword id="KW-1185">Reference proteome</keyword>
<keyword id="KW-1278">Translocase</keyword>
<keyword id="KW-0813">Transport</keyword>
<proteinExistence type="inferred from homology"/>
<reference key="1">
    <citation type="journal article" date="2010" name="PLoS ONE">
        <title>The complete genome sequence of Cupriavidus metallidurans strain CH34, a master survivalist in harsh and anthropogenic environments.</title>
        <authorList>
            <person name="Janssen P.J."/>
            <person name="Van Houdt R."/>
            <person name="Moors H."/>
            <person name="Monsieurs P."/>
            <person name="Morin N."/>
            <person name="Michaux A."/>
            <person name="Benotmane M.A."/>
            <person name="Leys N."/>
            <person name="Vallaeys T."/>
            <person name="Lapidus A."/>
            <person name="Monchy S."/>
            <person name="Medigue C."/>
            <person name="Taghavi S."/>
            <person name="McCorkle S."/>
            <person name="Dunn J."/>
            <person name="van der Lelie D."/>
            <person name="Mergeay M."/>
        </authorList>
    </citation>
    <scope>NUCLEOTIDE SEQUENCE [LARGE SCALE GENOMIC DNA]</scope>
    <source>
        <strain>ATCC 43123 / DSM 2839 / NBRC 102507 / CH34</strain>
    </source>
</reference>
<organism>
    <name type="scientific">Cupriavidus metallidurans (strain ATCC 43123 / DSM 2839 / NBRC 102507 / CH34)</name>
    <name type="common">Ralstonia metallidurans</name>
    <dbReference type="NCBI Taxonomy" id="266264"/>
    <lineage>
        <taxon>Bacteria</taxon>
        <taxon>Pseudomonadati</taxon>
        <taxon>Pseudomonadota</taxon>
        <taxon>Betaproteobacteria</taxon>
        <taxon>Burkholderiales</taxon>
        <taxon>Burkholderiaceae</taxon>
        <taxon>Cupriavidus</taxon>
    </lineage>
</organism>
<protein>
    <recommendedName>
        <fullName evidence="1">ATP synthase subunit beta</fullName>
        <ecNumber evidence="1">7.1.2.2</ecNumber>
    </recommendedName>
    <alternativeName>
        <fullName evidence="1">ATP synthase F1 sector subunit beta</fullName>
    </alternativeName>
    <alternativeName>
        <fullName evidence="1">F-ATPase subunit beta</fullName>
    </alternativeName>
</protein>